<reference key="1">
    <citation type="journal article" date="1999" name="DNA Res.">
        <title>Complete genome sequence of an aerobic hyper-thermophilic crenarchaeon, Aeropyrum pernix K1.</title>
        <authorList>
            <person name="Kawarabayasi Y."/>
            <person name="Hino Y."/>
            <person name="Horikawa H."/>
            <person name="Yamazaki S."/>
            <person name="Haikawa Y."/>
            <person name="Jin-no K."/>
            <person name="Takahashi M."/>
            <person name="Sekine M."/>
            <person name="Baba S."/>
            <person name="Ankai A."/>
            <person name="Kosugi H."/>
            <person name="Hosoyama A."/>
            <person name="Fukui S."/>
            <person name="Nagai Y."/>
            <person name="Nishijima K."/>
            <person name="Nakazawa H."/>
            <person name="Takamiya M."/>
            <person name="Masuda S."/>
            <person name="Funahashi T."/>
            <person name="Tanaka T."/>
            <person name="Kudoh Y."/>
            <person name="Yamazaki J."/>
            <person name="Kushida N."/>
            <person name="Oguchi A."/>
            <person name="Aoki K."/>
            <person name="Kubota K."/>
            <person name="Nakamura Y."/>
            <person name="Nomura N."/>
            <person name="Sako Y."/>
            <person name="Kikuchi H."/>
        </authorList>
    </citation>
    <scope>NUCLEOTIDE SEQUENCE [LARGE SCALE GENOMIC DNA]</scope>
    <source>
        <strain>ATCC 700893 / DSM 11879 / JCM 9820 / NBRC 100138 / K1</strain>
    </source>
</reference>
<accession>Q9YDM7</accession>
<feature type="chain" id="PRO_0000184970" description="Mannosyl-3-phosphoglycerate phosphatase">
    <location>
        <begin position="1"/>
        <end position="277"/>
    </location>
</feature>
<feature type="active site" description="Nucleophile" evidence="1">
    <location>
        <position position="13"/>
    </location>
</feature>
<feature type="binding site" evidence="1">
    <location>
        <position position="13"/>
    </location>
    <ligand>
        <name>Mg(2+)</name>
        <dbReference type="ChEBI" id="CHEBI:18420"/>
    </ligand>
</feature>
<feature type="binding site" evidence="1">
    <location>
        <position position="15"/>
    </location>
    <ligand>
        <name>Mg(2+)</name>
        <dbReference type="ChEBI" id="CHEBI:18420"/>
    </ligand>
</feature>
<feature type="binding site" evidence="1">
    <location>
        <position position="219"/>
    </location>
    <ligand>
        <name>Mg(2+)</name>
        <dbReference type="ChEBI" id="CHEBI:18420"/>
    </ligand>
</feature>
<evidence type="ECO:0000255" key="1">
    <source>
        <dbReference type="HAMAP-Rule" id="MF_00617"/>
    </source>
</evidence>
<proteinExistence type="inferred from homology"/>
<dbReference type="EC" id="3.1.3.70" evidence="1"/>
<dbReference type="EMBL" id="BA000002">
    <property type="protein sequence ID" value="BAA79870.2"/>
    <property type="molecule type" value="Genomic_DNA"/>
</dbReference>
<dbReference type="PIR" id="F72683">
    <property type="entry name" value="F72683"/>
</dbReference>
<dbReference type="RefSeq" id="WP_010866048.1">
    <property type="nucleotide sequence ID" value="NC_000854.2"/>
</dbReference>
<dbReference type="SMR" id="Q9YDM7"/>
<dbReference type="STRING" id="272557.APE_0887.1"/>
<dbReference type="EnsemblBacteria" id="BAA79870">
    <property type="protein sequence ID" value="BAA79870"/>
    <property type="gene ID" value="APE_0887.1"/>
</dbReference>
<dbReference type="GeneID" id="1444980"/>
<dbReference type="KEGG" id="ape:APE_0887.1"/>
<dbReference type="eggNOG" id="arCOG01215">
    <property type="taxonomic scope" value="Archaea"/>
</dbReference>
<dbReference type="UniPathway" id="UPA00130">
    <property type="reaction ID" value="UER00193"/>
</dbReference>
<dbReference type="Proteomes" id="UP000002518">
    <property type="component" value="Chromosome"/>
</dbReference>
<dbReference type="GO" id="GO:0005737">
    <property type="term" value="C:cytoplasm"/>
    <property type="evidence" value="ECO:0007669"/>
    <property type="project" value="UniProtKB-SubCell"/>
</dbReference>
<dbReference type="GO" id="GO:0050531">
    <property type="term" value="F:mannosyl-3-phosphoglycerate phosphatase activity"/>
    <property type="evidence" value="ECO:0007669"/>
    <property type="project" value="UniProtKB-UniRule"/>
</dbReference>
<dbReference type="GO" id="GO:0046872">
    <property type="term" value="F:metal ion binding"/>
    <property type="evidence" value="ECO:0007669"/>
    <property type="project" value="UniProtKB-KW"/>
</dbReference>
<dbReference type="GO" id="GO:0051479">
    <property type="term" value="P:mannosylglycerate biosynthetic process"/>
    <property type="evidence" value="ECO:0007669"/>
    <property type="project" value="UniProtKB-UniRule"/>
</dbReference>
<dbReference type="CDD" id="cd07507">
    <property type="entry name" value="HAD_Pase"/>
    <property type="match status" value="1"/>
</dbReference>
<dbReference type="Gene3D" id="3.40.50.1000">
    <property type="entry name" value="HAD superfamily/HAD-like"/>
    <property type="match status" value="1"/>
</dbReference>
<dbReference type="Gene3D" id="3.30.980.20">
    <property type="entry name" value="Putative mannosyl-3-phosphoglycerate phosphatase, domain 2"/>
    <property type="match status" value="1"/>
</dbReference>
<dbReference type="HAMAP" id="MF_00617">
    <property type="entry name" value="MPGP_rel"/>
    <property type="match status" value="1"/>
</dbReference>
<dbReference type="InterPro" id="IPR036412">
    <property type="entry name" value="HAD-like_sf"/>
</dbReference>
<dbReference type="InterPro" id="IPR006381">
    <property type="entry name" value="HAD-SF-IIB-MPGP"/>
</dbReference>
<dbReference type="InterPro" id="IPR006379">
    <property type="entry name" value="HAD-SF_hydro_IIB"/>
</dbReference>
<dbReference type="InterPro" id="IPR023214">
    <property type="entry name" value="HAD_sf"/>
</dbReference>
<dbReference type="InterPro" id="IPR012815">
    <property type="entry name" value="MPG_Pase"/>
</dbReference>
<dbReference type="InterPro" id="IPR033980">
    <property type="entry name" value="MPG_Pase_thermophiles"/>
</dbReference>
<dbReference type="NCBIfam" id="TIGR01484">
    <property type="entry name" value="HAD-SF-IIB"/>
    <property type="match status" value="1"/>
</dbReference>
<dbReference type="NCBIfam" id="TIGR01486">
    <property type="entry name" value="HAD-SF-IIB-MPGP"/>
    <property type="match status" value="1"/>
</dbReference>
<dbReference type="NCBIfam" id="TIGR02461">
    <property type="entry name" value="osmo_MPG_phos"/>
    <property type="match status" value="1"/>
</dbReference>
<dbReference type="SUPFAM" id="SSF56784">
    <property type="entry name" value="HAD-like"/>
    <property type="match status" value="1"/>
</dbReference>
<keyword id="KW-0963">Cytoplasm</keyword>
<keyword id="KW-0378">Hydrolase</keyword>
<keyword id="KW-0460">Magnesium</keyword>
<keyword id="KW-0479">Metal-binding</keyword>
<keyword id="KW-1185">Reference proteome</keyword>
<protein>
    <recommendedName>
        <fullName evidence="1">Mannosyl-3-phosphoglycerate phosphatase</fullName>
        <shortName evidence="1">MPGP</shortName>
        <ecNumber evidence="1">3.1.3.70</ecNumber>
    </recommendedName>
</protein>
<gene>
    <name evidence="1" type="primary">mngB</name>
    <name type="ordered locus">APE_0887.1</name>
</gene>
<comment type="function">
    <text evidence="1">Hydrolyzes mannosyl-3-phosphoglycerate (MPG) to form the osmolyte mannosylglycerate (MG).</text>
</comment>
<comment type="catalytic activity">
    <reaction evidence="1">
        <text>2-O-(alpha-D-mannosyl)-3-phosphoglycerate + H2O = (2R)-2-O-(alpha-D-mannosyl)-glycerate + phosphate</text>
        <dbReference type="Rhea" id="RHEA:19309"/>
        <dbReference type="ChEBI" id="CHEBI:15377"/>
        <dbReference type="ChEBI" id="CHEBI:43474"/>
        <dbReference type="ChEBI" id="CHEBI:57541"/>
        <dbReference type="ChEBI" id="CHEBI:57744"/>
        <dbReference type="EC" id="3.1.3.70"/>
    </reaction>
</comment>
<comment type="cofactor">
    <cofactor evidence="1">
        <name>Mg(2+)</name>
        <dbReference type="ChEBI" id="CHEBI:18420"/>
    </cofactor>
</comment>
<comment type="pathway">
    <text evidence="1">Carbohydrate biosynthesis; 2-(alpha-D-mannosyl)-D-glycerate biosynthesis; 2-(alpha-D-mannosyl)-D-glycerate from GDP-alpha-D-mannose (MPG route): step 2/2.</text>
</comment>
<comment type="subcellular location">
    <subcellularLocation>
        <location evidence="1">Cytoplasm</location>
    </subcellularLocation>
</comment>
<comment type="similarity">
    <text evidence="1">Belongs to the HAD-like hydrolase superfamily. MPGP family.</text>
</comment>
<organism>
    <name type="scientific">Aeropyrum pernix (strain ATCC 700893 / DSM 11879 / JCM 9820 / NBRC 100138 / K1)</name>
    <dbReference type="NCBI Taxonomy" id="272557"/>
    <lineage>
        <taxon>Archaea</taxon>
        <taxon>Thermoproteota</taxon>
        <taxon>Thermoprotei</taxon>
        <taxon>Desulfurococcales</taxon>
        <taxon>Desulfurococcaceae</taxon>
        <taxon>Aeropyrum</taxon>
    </lineage>
</organism>
<sequence length="277" mass="30128">MEARPCSGVIFTDLDNTLVGPGGEAGEAGEVYLEALDLGYRVVPVTSKSIYEIVELWDSIGVPPGERIALAESGGAIYGPRGSLARPTGFNSEVGLEYTALGKPLASIDALLDSLAETCGAVRLSKADATEAQLITGLPRERAALAARREYLEVIWSRSQECLDTILSTALRYRELTYVHRAPRTVQIAAHRGKGMAIDAALQEPLLRPCAKVVVTAGDSSHDIPIIERGMLAFRVDYNRDWSRLVKPIYMVIPYEAPKAWTMLIETVKTRSNTPSL</sequence>
<name>MPGP_AERPE</name>